<reference key="1">
    <citation type="journal article" date="2007" name="J. Bacteriol.">
        <title>The genome sequence of avian pathogenic Escherichia coli strain O1:K1:H7 shares strong similarities with human extraintestinal pathogenic E. coli genomes.</title>
        <authorList>
            <person name="Johnson T.J."/>
            <person name="Kariyawasam S."/>
            <person name="Wannemuehler Y."/>
            <person name="Mangiamele P."/>
            <person name="Johnson S.J."/>
            <person name="Doetkott C."/>
            <person name="Skyberg J.A."/>
            <person name="Lynne A.M."/>
            <person name="Johnson J.R."/>
            <person name="Nolan L.K."/>
        </authorList>
    </citation>
    <scope>NUCLEOTIDE SEQUENCE [LARGE SCALE GENOMIC DNA]</scope>
</reference>
<dbReference type="EMBL" id="CP000468">
    <property type="protein sequence ID" value="ABJ01087.1"/>
    <property type="molecule type" value="Genomic_DNA"/>
</dbReference>
<dbReference type="RefSeq" id="WP_000956528.1">
    <property type="nucleotide sequence ID" value="NZ_CADILS010000002.1"/>
</dbReference>
<dbReference type="SMR" id="A1ABP7"/>
<dbReference type="KEGG" id="ecv:APECO1_786"/>
<dbReference type="HOGENOM" id="CLU_013016_0_3_6"/>
<dbReference type="Proteomes" id="UP000008216">
    <property type="component" value="Chromosome"/>
</dbReference>
<dbReference type="GO" id="GO:0005886">
    <property type="term" value="C:plasma membrane"/>
    <property type="evidence" value="ECO:0007669"/>
    <property type="project" value="UniProtKB-SubCell"/>
</dbReference>
<dbReference type="GO" id="GO:0090482">
    <property type="term" value="F:vitamin transmembrane transporter activity"/>
    <property type="evidence" value="ECO:0007669"/>
    <property type="project" value="UniProtKB-UniRule"/>
</dbReference>
<dbReference type="GO" id="GO:0015889">
    <property type="term" value="P:cobalamin transport"/>
    <property type="evidence" value="ECO:0007669"/>
    <property type="project" value="UniProtKB-UniRule"/>
</dbReference>
<dbReference type="CDD" id="cd06550">
    <property type="entry name" value="TM_ABC_iron-siderophores_like"/>
    <property type="match status" value="1"/>
</dbReference>
<dbReference type="FunFam" id="1.10.3470.10:FF:000001">
    <property type="entry name" value="Vitamin B12 ABC transporter permease BtuC"/>
    <property type="match status" value="1"/>
</dbReference>
<dbReference type="Gene3D" id="1.10.3470.10">
    <property type="entry name" value="ABC transporter involved in vitamin B12 uptake, BtuC"/>
    <property type="match status" value="1"/>
</dbReference>
<dbReference type="HAMAP" id="MF_01004">
    <property type="entry name" value="BtuC"/>
    <property type="match status" value="1"/>
</dbReference>
<dbReference type="InterPro" id="IPR037294">
    <property type="entry name" value="ABC_BtuC-like"/>
</dbReference>
<dbReference type="InterPro" id="IPR023691">
    <property type="entry name" value="ABC_transptr_BtuC"/>
</dbReference>
<dbReference type="InterPro" id="IPR000522">
    <property type="entry name" value="ABC_transptr_permease_BtuC"/>
</dbReference>
<dbReference type="NCBIfam" id="NF003001">
    <property type="entry name" value="PRK03784.1"/>
    <property type="match status" value="1"/>
</dbReference>
<dbReference type="PANTHER" id="PTHR30472">
    <property type="entry name" value="FERRIC ENTEROBACTIN TRANSPORT SYSTEM PERMEASE PROTEIN"/>
    <property type="match status" value="1"/>
</dbReference>
<dbReference type="PANTHER" id="PTHR30472:SF29">
    <property type="entry name" value="VITAMIN B12 IMPORT SYSTEM PERMEASE PROTEIN BTUC"/>
    <property type="match status" value="1"/>
</dbReference>
<dbReference type="Pfam" id="PF01032">
    <property type="entry name" value="FecCD"/>
    <property type="match status" value="1"/>
</dbReference>
<dbReference type="SUPFAM" id="SSF81345">
    <property type="entry name" value="ABC transporter involved in vitamin B12 uptake, BtuC"/>
    <property type="match status" value="1"/>
</dbReference>
<organism>
    <name type="scientific">Escherichia coli O1:K1 / APEC</name>
    <dbReference type="NCBI Taxonomy" id="405955"/>
    <lineage>
        <taxon>Bacteria</taxon>
        <taxon>Pseudomonadati</taxon>
        <taxon>Pseudomonadota</taxon>
        <taxon>Gammaproteobacteria</taxon>
        <taxon>Enterobacterales</taxon>
        <taxon>Enterobacteriaceae</taxon>
        <taxon>Escherichia</taxon>
    </lineage>
</organism>
<evidence type="ECO:0000255" key="1">
    <source>
        <dbReference type="HAMAP-Rule" id="MF_01004"/>
    </source>
</evidence>
<protein>
    <recommendedName>
        <fullName evidence="1">Vitamin B12 import system permease protein BtuC</fullName>
    </recommendedName>
</protein>
<sequence>MLTLARQQQRQNIRWLLCLSVLMLLALLLSLCAGEQWISPGDWFTPRGELFVWQIRLPRTLAVLLVGAALAISGAVMQALFENPLAEPGLLGVSNGAGVGLIAAVLLGQGQLPNWALGLCAIAGALIITLILLRFARRHLSTSRLLLAGVALGIICSALMTWAIYFSTSVDLRQLMYWMMGGFGGVDWRQSWLMLALIPVLLWICCQSRPMNMLALGEISARQLGLPLWFWRNVLVAATGWMVGVSVALAGAIGFIGLVIPHILRLCGLTDHRVLLPGCALAGASALLLADIVARLALAAAELPIGVVTATLGAPVFIWLLLKAGR</sequence>
<comment type="function">
    <text evidence="1">Part of the ABC transporter complex BtuCDF involved in vitamin B12 import. Involved in the translocation of the substrate across the membrane.</text>
</comment>
<comment type="subunit">
    <text evidence="1">The complex is composed of two ATP-binding proteins (BtuD), two transmembrane proteins (BtuC) and a solute-binding protein (BtuF).</text>
</comment>
<comment type="subcellular location">
    <subcellularLocation>
        <location evidence="1">Cell inner membrane</location>
        <topology evidence="1">Multi-pass membrane protein</topology>
    </subcellularLocation>
</comment>
<comment type="similarity">
    <text evidence="1">Belongs to the binding-protein-dependent transport system permease family. FecCD subfamily.</text>
</comment>
<accession>A1ABP7</accession>
<gene>
    <name evidence="1" type="primary">btuC</name>
    <name type="ordered locus">Ecok1_15930</name>
    <name type="ORF">APECO1_786</name>
</gene>
<keyword id="KW-0997">Cell inner membrane</keyword>
<keyword id="KW-1003">Cell membrane</keyword>
<keyword id="KW-0472">Membrane</keyword>
<keyword id="KW-1185">Reference proteome</keyword>
<keyword id="KW-0812">Transmembrane</keyword>
<keyword id="KW-1133">Transmembrane helix</keyword>
<keyword id="KW-0813">Transport</keyword>
<name>BTUC_ECOK1</name>
<proteinExistence type="inferred from homology"/>
<feature type="chain" id="PRO_1000062773" description="Vitamin B12 import system permease protein BtuC">
    <location>
        <begin position="1"/>
        <end position="326"/>
    </location>
</feature>
<feature type="transmembrane region" description="Helical" evidence="1">
    <location>
        <begin position="15"/>
        <end position="35"/>
    </location>
</feature>
<feature type="transmembrane region" description="Helical" evidence="1">
    <location>
        <begin position="61"/>
        <end position="81"/>
    </location>
</feature>
<feature type="transmembrane region" description="Helical" evidence="1">
    <location>
        <begin position="88"/>
        <end position="108"/>
    </location>
</feature>
<feature type="transmembrane region" description="Helical" evidence="1">
    <location>
        <begin position="112"/>
        <end position="132"/>
    </location>
</feature>
<feature type="transmembrane region" description="Helical" evidence="1">
    <location>
        <begin position="146"/>
        <end position="166"/>
    </location>
</feature>
<feature type="transmembrane region" description="Helical" evidence="1">
    <location>
        <begin position="184"/>
        <end position="204"/>
    </location>
</feature>
<feature type="transmembrane region" description="Helical" evidence="1">
    <location>
        <begin position="240"/>
        <end position="260"/>
    </location>
</feature>
<feature type="transmembrane region" description="Helical" evidence="1">
    <location>
        <begin position="274"/>
        <end position="294"/>
    </location>
</feature>
<feature type="transmembrane region" description="Helical" evidence="1">
    <location>
        <begin position="302"/>
        <end position="322"/>
    </location>
</feature>